<keyword id="KW-0028">Amino-acid biosynthesis</keyword>
<keyword id="KW-0057">Aromatic amino acid biosynthesis</keyword>
<keyword id="KW-0274">FAD</keyword>
<keyword id="KW-0285">Flavoprotein</keyword>
<keyword id="KW-0288">FMN</keyword>
<keyword id="KW-0456">Lyase</keyword>
<keyword id="KW-0521">NADP</keyword>
<keyword id="KW-1185">Reference proteome</keyword>
<gene>
    <name evidence="1" type="primary">aroC</name>
    <name type="ordered locus">GSU2027</name>
</gene>
<feature type="chain" id="PRO_0000140591" description="Chorismate synthase">
    <location>
        <begin position="1"/>
        <end position="393"/>
    </location>
</feature>
<feature type="binding site" evidence="1">
    <location>
        <position position="40"/>
    </location>
    <ligand>
        <name>NADP(+)</name>
        <dbReference type="ChEBI" id="CHEBI:58349"/>
    </ligand>
</feature>
<feature type="binding site" evidence="1">
    <location>
        <position position="46"/>
    </location>
    <ligand>
        <name>NADP(+)</name>
        <dbReference type="ChEBI" id="CHEBI:58349"/>
    </ligand>
</feature>
<feature type="binding site" evidence="1">
    <location>
        <begin position="129"/>
        <end position="131"/>
    </location>
    <ligand>
        <name>FMN</name>
        <dbReference type="ChEBI" id="CHEBI:58210"/>
    </ligand>
</feature>
<feature type="binding site" evidence="1">
    <location>
        <begin position="249"/>
        <end position="250"/>
    </location>
    <ligand>
        <name>FMN</name>
        <dbReference type="ChEBI" id="CHEBI:58210"/>
    </ligand>
</feature>
<feature type="binding site" evidence="1">
    <location>
        <position position="301"/>
    </location>
    <ligand>
        <name>FMN</name>
        <dbReference type="ChEBI" id="CHEBI:58210"/>
    </ligand>
</feature>
<feature type="binding site" evidence="1">
    <location>
        <begin position="316"/>
        <end position="320"/>
    </location>
    <ligand>
        <name>FMN</name>
        <dbReference type="ChEBI" id="CHEBI:58210"/>
    </ligand>
</feature>
<feature type="binding site" evidence="1">
    <location>
        <position position="342"/>
    </location>
    <ligand>
        <name>FMN</name>
        <dbReference type="ChEBI" id="CHEBI:58210"/>
    </ligand>
</feature>
<sequence>MLRYLTAGESHGPQLTAIIEGLPAGLKISDESINCDLARRQCGYGRGGRMKIERDEAQILSGVRWGETIGSPVTLCIVNRDWINWQEKMSPNARHRDEKIRVTRSRPGHADLPGAMKYDHRDVRNILERSSARETAVRVAVGAVAKAFLASFGIEVNGFVSEVGGIRAERRSLQLERMKELSAASELFTYDAEAEERMKAFIDGAREAGDTVGGVVEIIASGLPVGLGSHVQWDRKLDARLAMAVMSIQAIKGVEIGLGFDAARRPGSQVHDEIYYDSTRISRGELSGFYRKSNNAGGIEGGITNGEDIVIRAAMKPIPTLYRPLRSVDMQTKEPFEATVERSDVCAVPAAAVVAEAVVALELANAMLEKFGGDSLGEVRRNYEGYLEYVRAF</sequence>
<name>AROC_GEOSL</name>
<protein>
    <recommendedName>
        <fullName evidence="1">Chorismate synthase</fullName>
        <shortName evidence="1">CS</shortName>
        <ecNumber evidence="1">4.2.3.5</ecNumber>
    </recommendedName>
    <alternativeName>
        <fullName evidence="1">5-enolpyruvylshikimate-3-phosphate phospholyase</fullName>
    </alternativeName>
</protein>
<evidence type="ECO:0000255" key="1">
    <source>
        <dbReference type="HAMAP-Rule" id="MF_00300"/>
    </source>
</evidence>
<dbReference type="EC" id="4.2.3.5" evidence="1"/>
<dbReference type="EMBL" id="AE017180">
    <property type="protein sequence ID" value="AAR35403.1"/>
    <property type="molecule type" value="Genomic_DNA"/>
</dbReference>
<dbReference type="RefSeq" id="NP_953076.1">
    <property type="nucleotide sequence ID" value="NC_002939.5"/>
</dbReference>
<dbReference type="RefSeq" id="WP_010942670.1">
    <property type="nucleotide sequence ID" value="NC_002939.5"/>
</dbReference>
<dbReference type="SMR" id="Q74BL4"/>
<dbReference type="FunCoup" id="Q74BL4">
    <property type="interactions" value="473"/>
</dbReference>
<dbReference type="STRING" id="243231.GSU2027"/>
<dbReference type="EnsemblBacteria" id="AAR35403">
    <property type="protein sequence ID" value="AAR35403"/>
    <property type="gene ID" value="GSU2027"/>
</dbReference>
<dbReference type="KEGG" id="gsu:GSU2027"/>
<dbReference type="PATRIC" id="fig|243231.5.peg.2063"/>
<dbReference type="eggNOG" id="COG0082">
    <property type="taxonomic scope" value="Bacteria"/>
</dbReference>
<dbReference type="HOGENOM" id="CLU_034547_2_0_7"/>
<dbReference type="InParanoid" id="Q74BL4"/>
<dbReference type="OrthoDB" id="9771806at2"/>
<dbReference type="UniPathway" id="UPA00053">
    <property type="reaction ID" value="UER00090"/>
</dbReference>
<dbReference type="Proteomes" id="UP000000577">
    <property type="component" value="Chromosome"/>
</dbReference>
<dbReference type="GO" id="GO:0005829">
    <property type="term" value="C:cytosol"/>
    <property type="evidence" value="ECO:0000318"/>
    <property type="project" value="GO_Central"/>
</dbReference>
<dbReference type="GO" id="GO:0004107">
    <property type="term" value="F:chorismate synthase activity"/>
    <property type="evidence" value="ECO:0000318"/>
    <property type="project" value="GO_Central"/>
</dbReference>
<dbReference type="GO" id="GO:0010181">
    <property type="term" value="F:FMN binding"/>
    <property type="evidence" value="ECO:0000318"/>
    <property type="project" value="GO_Central"/>
</dbReference>
<dbReference type="GO" id="GO:0008652">
    <property type="term" value="P:amino acid biosynthetic process"/>
    <property type="evidence" value="ECO:0007669"/>
    <property type="project" value="UniProtKB-KW"/>
</dbReference>
<dbReference type="GO" id="GO:0009073">
    <property type="term" value="P:aromatic amino acid family biosynthetic process"/>
    <property type="evidence" value="ECO:0000318"/>
    <property type="project" value="GO_Central"/>
</dbReference>
<dbReference type="GO" id="GO:0009423">
    <property type="term" value="P:chorismate biosynthetic process"/>
    <property type="evidence" value="ECO:0000318"/>
    <property type="project" value="GO_Central"/>
</dbReference>
<dbReference type="CDD" id="cd07304">
    <property type="entry name" value="Chorismate_synthase"/>
    <property type="match status" value="1"/>
</dbReference>
<dbReference type="FunFam" id="3.60.150.10:FF:000002">
    <property type="entry name" value="Chorismate synthase"/>
    <property type="match status" value="1"/>
</dbReference>
<dbReference type="Gene3D" id="3.60.150.10">
    <property type="entry name" value="Chorismate synthase AroC"/>
    <property type="match status" value="1"/>
</dbReference>
<dbReference type="HAMAP" id="MF_00300">
    <property type="entry name" value="Chorismate_synth"/>
    <property type="match status" value="1"/>
</dbReference>
<dbReference type="InterPro" id="IPR000453">
    <property type="entry name" value="Chorismate_synth"/>
</dbReference>
<dbReference type="InterPro" id="IPR035904">
    <property type="entry name" value="Chorismate_synth_AroC_sf"/>
</dbReference>
<dbReference type="InterPro" id="IPR020541">
    <property type="entry name" value="Chorismate_synthase_CS"/>
</dbReference>
<dbReference type="NCBIfam" id="TIGR00033">
    <property type="entry name" value="aroC"/>
    <property type="match status" value="1"/>
</dbReference>
<dbReference type="NCBIfam" id="NF003793">
    <property type="entry name" value="PRK05382.1"/>
    <property type="match status" value="1"/>
</dbReference>
<dbReference type="PANTHER" id="PTHR21085">
    <property type="entry name" value="CHORISMATE SYNTHASE"/>
    <property type="match status" value="1"/>
</dbReference>
<dbReference type="PANTHER" id="PTHR21085:SF0">
    <property type="entry name" value="CHORISMATE SYNTHASE"/>
    <property type="match status" value="1"/>
</dbReference>
<dbReference type="Pfam" id="PF01264">
    <property type="entry name" value="Chorismate_synt"/>
    <property type="match status" value="1"/>
</dbReference>
<dbReference type="PIRSF" id="PIRSF001456">
    <property type="entry name" value="Chorismate_synth"/>
    <property type="match status" value="1"/>
</dbReference>
<dbReference type="SUPFAM" id="SSF103263">
    <property type="entry name" value="Chorismate synthase, AroC"/>
    <property type="match status" value="1"/>
</dbReference>
<dbReference type="PROSITE" id="PS00787">
    <property type="entry name" value="CHORISMATE_SYNTHASE_1"/>
    <property type="match status" value="1"/>
</dbReference>
<dbReference type="PROSITE" id="PS00788">
    <property type="entry name" value="CHORISMATE_SYNTHASE_2"/>
    <property type="match status" value="1"/>
</dbReference>
<dbReference type="PROSITE" id="PS00789">
    <property type="entry name" value="CHORISMATE_SYNTHASE_3"/>
    <property type="match status" value="1"/>
</dbReference>
<proteinExistence type="inferred from homology"/>
<accession>Q74BL4</accession>
<comment type="function">
    <text evidence="1">Catalyzes the anti-1,4-elimination of the C-3 phosphate and the C-6 proR hydrogen from 5-enolpyruvylshikimate-3-phosphate (EPSP) to yield chorismate, which is the branch point compound that serves as the starting substrate for the three terminal pathways of aromatic amino acid biosynthesis. This reaction introduces a second double bond into the aromatic ring system.</text>
</comment>
<comment type="catalytic activity">
    <reaction evidence="1">
        <text>5-O-(1-carboxyvinyl)-3-phosphoshikimate = chorismate + phosphate</text>
        <dbReference type="Rhea" id="RHEA:21020"/>
        <dbReference type="ChEBI" id="CHEBI:29748"/>
        <dbReference type="ChEBI" id="CHEBI:43474"/>
        <dbReference type="ChEBI" id="CHEBI:57701"/>
        <dbReference type="EC" id="4.2.3.5"/>
    </reaction>
</comment>
<comment type="cofactor">
    <cofactor evidence="1">
        <name>FMNH2</name>
        <dbReference type="ChEBI" id="CHEBI:57618"/>
    </cofactor>
    <text evidence="1">Reduced FMN (FMNH(2)).</text>
</comment>
<comment type="pathway">
    <text evidence="1">Metabolic intermediate biosynthesis; chorismate biosynthesis; chorismate from D-erythrose 4-phosphate and phosphoenolpyruvate: step 7/7.</text>
</comment>
<comment type="subunit">
    <text evidence="1">Homotetramer.</text>
</comment>
<comment type="similarity">
    <text evidence="1">Belongs to the chorismate synthase family.</text>
</comment>
<reference key="1">
    <citation type="journal article" date="2003" name="Science">
        <title>Genome of Geobacter sulfurreducens: metal reduction in subsurface environments.</title>
        <authorList>
            <person name="Methe B.A."/>
            <person name="Nelson K.E."/>
            <person name="Eisen J.A."/>
            <person name="Paulsen I.T."/>
            <person name="Nelson W.C."/>
            <person name="Heidelberg J.F."/>
            <person name="Wu D."/>
            <person name="Wu M."/>
            <person name="Ward N.L."/>
            <person name="Beanan M.J."/>
            <person name="Dodson R.J."/>
            <person name="Madupu R."/>
            <person name="Brinkac L.M."/>
            <person name="Daugherty S.C."/>
            <person name="DeBoy R.T."/>
            <person name="Durkin A.S."/>
            <person name="Gwinn M.L."/>
            <person name="Kolonay J.F."/>
            <person name="Sullivan S.A."/>
            <person name="Haft D.H."/>
            <person name="Selengut J."/>
            <person name="Davidsen T.M."/>
            <person name="Zafar N."/>
            <person name="White O."/>
            <person name="Tran B."/>
            <person name="Romero C."/>
            <person name="Forberger H.A."/>
            <person name="Weidman J.F."/>
            <person name="Khouri H.M."/>
            <person name="Feldblyum T.V."/>
            <person name="Utterback T.R."/>
            <person name="Van Aken S.E."/>
            <person name="Lovley D.R."/>
            <person name="Fraser C.M."/>
        </authorList>
    </citation>
    <scope>NUCLEOTIDE SEQUENCE [LARGE SCALE GENOMIC DNA]</scope>
    <source>
        <strain>ATCC 51573 / DSM 12127 / PCA</strain>
    </source>
</reference>
<organism>
    <name type="scientific">Geobacter sulfurreducens (strain ATCC 51573 / DSM 12127 / PCA)</name>
    <dbReference type="NCBI Taxonomy" id="243231"/>
    <lineage>
        <taxon>Bacteria</taxon>
        <taxon>Pseudomonadati</taxon>
        <taxon>Thermodesulfobacteriota</taxon>
        <taxon>Desulfuromonadia</taxon>
        <taxon>Geobacterales</taxon>
        <taxon>Geobacteraceae</taxon>
        <taxon>Geobacter</taxon>
    </lineage>
</organism>